<comment type="function">
    <text evidence="3">Contributes to the intracellular multiplication of tobamoviruses, probably being a membrane anchor promoting the formation of the replication complex.</text>
</comment>
<comment type="subunit">
    <text evidence="3">Constituent of tobamovirus replication complex. Interacts with the helicase domain of tobamovirus-encoded replication proteins.</text>
</comment>
<comment type="subcellular location">
    <subcellularLocation>
        <location evidence="1">Vacuole membrane</location>
        <topology evidence="1">Multi-pass membrane protein</topology>
    </subcellularLocation>
</comment>
<comment type="disruption phenotype">
    <text evidence="3">When associated with TOM1 disruption, reduced efficiency of intracellular multiplication of tobamoviruses (e.g. crucifer strain TMV-Cg), characterized by a reduced accumulation of viral coat protein (CP) and reduced amplification of TMV-related RNAs.</text>
</comment>
<comment type="similarity">
    <text evidence="4">Belongs to the plant tobamovirus multiplication TOM1 protein family.</text>
</comment>
<comment type="sequence caution" evidence="4">
    <conflict type="erroneous initiation">
        <sequence resource="EMBL-CDS" id="AAM61605"/>
    </conflict>
    <text>Truncated N-terminus.</text>
</comment>
<proteinExistence type="evidence at protein level"/>
<keyword id="KW-0945">Host-virus interaction</keyword>
<keyword id="KW-0472">Membrane</keyword>
<keyword id="KW-1185">Reference proteome</keyword>
<keyword id="KW-0812">Transmembrane</keyword>
<keyword id="KW-1133">Transmembrane helix</keyword>
<keyword id="KW-0926">Vacuole</keyword>
<organism>
    <name type="scientific">Arabidopsis thaliana</name>
    <name type="common">Mouse-ear cress</name>
    <dbReference type="NCBI Taxonomy" id="3702"/>
    <lineage>
        <taxon>Eukaryota</taxon>
        <taxon>Viridiplantae</taxon>
        <taxon>Streptophyta</taxon>
        <taxon>Embryophyta</taxon>
        <taxon>Tracheophyta</taxon>
        <taxon>Spermatophyta</taxon>
        <taxon>Magnoliopsida</taxon>
        <taxon>eudicotyledons</taxon>
        <taxon>Gunneridae</taxon>
        <taxon>Pentapetalae</taxon>
        <taxon>rosids</taxon>
        <taxon>malvids</taxon>
        <taxon>Brassicales</taxon>
        <taxon>Brassicaceae</taxon>
        <taxon>Camelineae</taxon>
        <taxon>Arabidopsis</taxon>
    </lineage>
</organism>
<name>TOM3_ARATH</name>
<accession>Q9ZUM2</accession>
<accession>Q8LF52</accession>
<accession>Q948X6</accession>
<sequence>MRIGGVEVTKFASEMMSSSSSSAVEMLNLKEASNWWSDVNESPIWQDRIFHVLAVLYGIVSLVAVIQLVRIQLRVPEYGWTTQKVFHFLNFVVNGVRAVVFVFRRNVQFMQPEILQHILLDIPSLAFFTTYALLVLFWAEIYYQARAVSTDGLRPSFFTINAVVYVVQIALWLVLWWKPVRVMVILSKMFFAGVSLFAALGFLLYGGRLFLMLQRFPVESKGRRKKLQEVGYVTTICFTCFLIRCIMMCFAAFDEGANLDVLDHPILNFIYYLLVEILPSSLVLFILRKLPPKRGITQYHQIR</sequence>
<reference key="1">
    <citation type="journal article" date="2002" name="J. Virol.">
        <title>Complete inhibition of tobamovirus multiplication by simultaneous mutations in two homologous host genes.</title>
        <authorList>
            <person name="Yamanaka T."/>
            <person name="Imai T."/>
            <person name="Satoh R."/>
            <person name="Kawashima A."/>
            <person name="Takahashi M."/>
            <person name="Tomita K."/>
            <person name="Kubota K."/>
            <person name="Meshi T."/>
            <person name="Naito S."/>
            <person name="Ishikawa M."/>
        </authorList>
    </citation>
    <scope>NUCLEOTIDE SEQUENCE [MRNA]</scope>
    <scope>FUNCTION</scope>
    <scope>DISRUPTION PHENOTYPE</scope>
    <scope>SUBUNIT</scope>
    <scope>INTERACTION WITH TMV-L REPLICASE</scope>
    <scope>TOPOLOGY</scope>
    <source>
        <strain>cv. Columbia</strain>
    </source>
</reference>
<reference key="2">
    <citation type="journal article" date="1999" name="Nature">
        <title>Sequence and analysis of chromosome 2 of the plant Arabidopsis thaliana.</title>
        <authorList>
            <person name="Lin X."/>
            <person name="Kaul S."/>
            <person name="Rounsley S.D."/>
            <person name="Shea T.P."/>
            <person name="Benito M.-I."/>
            <person name="Town C.D."/>
            <person name="Fujii C.Y."/>
            <person name="Mason T.M."/>
            <person name="Bowman C.L."/>
            <person name="Barnstead M.E."/>
            <person name="Feldblyum T.V."/>
            <person name="Buell C.R."/>
            <person name="Ketchum K.A."/>
            <person name="Lee J.J."/>
            <person name="Ronning C.M."/>
            <person name="Koo H.L."/>
            <person name="Moffat K.S."/>
            <person name="Cronin L.A."/>
            <person name="Shen M."/>
            <person name="Pai G."/>
            <person name="Van Aken S."/>
            <person name="Umayam L."/>
            <person name="Tallon L.J."/>
            <person name="Gill J.E."/>
            <person name="Adams M.D."/>
            <person name="Carrera A.J."/>
            <person name="Creasy T.H."/>
            <person name="Goodman H.M."/>
            <person name="Somerville C.R."/>
            <person name="Copenhaver G.P."/>
            <person name="Preuss D."/>
            <person name="Nierman W.C."/>
            <person name="White O."/>
            <person name="Eisen J.A."/>
            <person name="Salzberg S.L."/>
            <person name="Fraser C.M."/>
            <person name="Venter J.C."/>
        </authorList>
    </citation>
    <scope>NUCLEOTIDE SEQUENCE [LARGE SCALE GENOMIC DNA]</scope>
    <source>
        <strain>cv. Columbia</strain>
    </source>
</reference>
<reference key="3">
    <citation type="journal article" date="2017" name="Plant J.">
        <title>Araport11: a complete reannotation of the Arabidopsis thaliana reference genome.</title>
        <authorList>
            <person name="Cheng C.Y."/>
            <person name="Krishnakumar V."/>
            <person name="Chan A.P."/>
            <person name="Thibaud-Nissen F."/>
            <person name="Schobel S."/>
            <person name="Town C.D."/>
        </authorList>
    </citation>
    <scope>GENOME REANNOTATION</scope>
    <source>
        <strain>cv. Columbia</strain>
    </source>
</reference>
<reference key="4">
    <citation type="journal article" date="2002" name="Science">
        <title>Functional annotation of a full-length Arabidopsis cDNA collection.</title>
        <authorList>
            <person name="Seki M."/>
            <person name="Narusaka M."/>
            <person name="Kamiya A."/>
            <person name="Ishida J."/>
            <person name="Satou M."/>
            <person name="Sakurai T."/>
            <person name="Nakajima M."/>
            <person name="Enju A."/>
            <person name="Akiyama K."/>
            <person name="Oono Y."/>
            <person name="Muramatsu M."/>
            <person name="Hayashizaki Y."/>
            <person name="Kawai J."/>
            <person name="Carninci P."/>
            <person name="Itoh M."/>
            <person name="Ishii Y."/>
            <person name="Arakawa T."/>
            <person name="Shibata K."/>
            <person name="Shinagawa A."/>
            <person name="Shinozaki K."/>
        </authorList>
    </citation>
    <scope>NUCLEOTIDE SEQUENCE [LARGE SCALE MRNA]</scope>
    <source>
        <strain>cv. Columbia</strain>
    </source>
</reference>
<reference key="5">
    <citation type="submission" date="2002-03" db="EMBL/GenBank/DDBJ databases">
        <title>Full-length cDNA from Arabidopsis thaliana.</title>
        <authorList>
            <person name="Brover V.V."/>
            <person name="Troukhan M.E."/>
            <person name="Alexandrov N.A."/>
            <person name="Lu Y.-P."/>
            <person name="Flavell R.B."/>
            <person name="Feldmann K.A."/>
        </authorList>
    </citation>
    <scope>NUCLEOTIDE SEQUENCE [LARGE SCALE MRNA]</scope>
</reference>
<dbReference type="EMBL" id="AB036427">
    <property type="protein sequence ID" value="BAB64308.1"/>
    <property type="molecule type" value="mRNA"/>
</dbReference>
<dbReference type="EMBL" id="AC005936">
    <property type="protein sequence ID" value="AAC97216.2"/>
    <property type="molecule type" value="Genomic_DNA"/>
</dbReference>
<dbReference type="EMBL" id="CP002685">
    <property type="protein sequence ID" value="AEC05557.1"/>
    <property type="molecule type" value="Genomic_DNA"/>
</dbReference>
<dbReference type="EMBL" id="AK117222">
    <property type="protein sequence ID" value="BAC41898.1"/>
    <property type="molecule type" value="mRNA"/>
</dbReference>
<dbReference type="EMBL" id="AY085048">
    <property type="protein sequence ID" value="AAM61605.1"/>
    <property type="status" value="ALT_INIT"/>
    <property type="molecule type" value="mRNA"/>
</dbReference>
<dbReference type="PIR" id="H84433">
    <property type="entry name" value="H84433"/>
</dbReference>
<dbReference type="RefSeq" id="NP_027422.1">
    <property type="nucleotide sequence ID" value="NM_126278.3"/>
</dbReference>
<dbReference type="FunCoup" id="Q9ZUM2">
    <property type="interactions" value="162"/>
</dbReference>
<dbReference type="STRING" id="3702.Q9ZUM2"/>
<dbReference type="PaxDb" id="3702-AT2G02180.1"/>
<dbReference type="ProteomicsDB" id="234456"/>
<dbReference type="EnsemblPlants" id="AT2G02180.1">
    <property type="protein sequence ID" value="AT2G02180.1"/>
    <property type="gene ID" value="AT2G02180"/>
</dbReference>
<dbReference type="GeneID" id="814749"/>
<dbReference type="Gramene" id="AT2G02180.1">
    <property type="protein sequence ID" value="AT2G02180.1"/>
    <property type="gene ID" value="AT2G02180"/>
</dbReference>
<dbReference type="KEGG" id="ath:AT2G02180"/>
<dbReference type="Araport" id="AT2G02180"/>
<dbReference type="TAIR" id="AT2G02180">
    <property type="gene designation" value="TOM3"/>
</dbReference>
<dbReference type="eggNOG" id="ENOG502QQMF">
    <property type="taxonomic scope" value="Eukaryota"/>
</dbReference>
<dbReference type="HOGENOM" id="CLU_059685_0_0_1"/>
<dbReference type="InParanoid" id="Q9ZUM2"/>
<dbReference type="OMA" id="YASEMMM"/>
<dbReference type="OrthoDB" id="19798at2759"/>
<dbReference type="PhylomeDB" id="Q9ZUM2"/>
<dbReference type="PRO" id="PR:Q9ZUM2"/>
<dbReference type="Proteomes" id="UP000006548">
    <property type="component" value="Chromosome 2"/>
</dbReference>
<dbReference type="ExpressionAtlas" id="Q9ZUM2">
    <property type="expression patterns" value="baseline and differential"/>
</dbReference>
<dbReference type="GO" id="GO:0009705">
    <property type="term" value="C:plant-type vacuole membrane"/>
    <property type="evidence" value="ECO:0000250"/>
    <property type="project" value="UniProtKB"/>
</dbReference>
<dbReference type="GO" id="GO:0046786">
    <property type="term" value="P:viral replication complex formation and maintenance"/>
    <property type="evidence" value="ECO:0000315"/>
    <property type="project" value="TAIR"/>
</dbReference>
<dbReference type="InterPro" id="IPR040226">
    <property type="entry name" value="THH1/TOM1/TOM3"/>
</dbReference>
<dbReference type="InterPro" id="IPR009457">
    <property type="entry name" value="THH1/TOM1/TOM3_dom"/>
</dbReference>
<dbReference type="PANTHER" id="PTHR31142">
    <property type="entry name" value="TOBAMOVIRUS MULTIPLICATION PROTEIN 1-LIKE ISOFORM X1"/>
    <property type="match status" value="1"/>
</dbReference>
<dbReference type="PANTHER" id="PTHR31142:SF46">
    <property type="entry name" value="TOBAMOVIRUS MULTIPLICATION PROTEIN 3"/>
    <property type="match status" value="1"/>
</dbReference>
<dbReference type="Pfam" id="PF06454">
    <property type="entry name" value="THH1_TOM1-3_dom"/>
    <property type="match status" value="1"/>
</dbReference>
<gene>
    <name type="primary">TOM3</name>
    <name type="ordered locus">At2g02180</name>
    <name type="ORF">F5O4.5</name>
</gene>
<feature type="chain" id="PRO_0000423670" description="Tobamovirus multiplication protein 3">
    <location>
        <begin position="1"/>
        <end position="303"/>
    </location>
</feature>
<feature type="topological domain" description="Extracellular" evidence="2">
    <location>
        <begin position="1"/>
        <end position="48"/>
    </location>
</feature>
<feature type="transmembrane region" description="Helical" evidence="2">
    <location>
        <begin position="49"/>
        <end position="69"/>
    </location>
</feature>
<feature type="topological domain" description="Cytoplasmic" evidence="2">
    <location>
        <begin position="70"/>
        <end position="82"/>
    </location>
</feature>
<feature type="transmembrane region" description="Helical" evidence="2">
    <location>
        <begin position="83"/>
        <end position="103"/>
    </location>
</feature>
<feature type="topological domain" description="Extracellular" evidence="2">
    <location>
        <begin position="104"/>
        <end position="117"/>
    </location>
</feature>
<feature type="transmembrane region" description="Helical" evidence="2">
    <location>
        <begin position="118"/>
        <end position="138"/>
    </location>
</feature>
<feature type="topological domain" description="Cytoplasmic" evidence="2">
    <location>
        <begin position="139"/>
        <end position="156"/>
    </location>
</feature>
<feature type="transmembrane region" description="Helical" evidence="2">
    <location>
        <begin position="157"/>
        <end position="177"/>
    </location>
</feature>
<feature type="topological domain" description="Extracellular" evidence="2">
    <location>
        <begin position="178"/>
        <end position="183"/>
    </location>
</feature>
<feature type="transmembrane region" description="Helical" evidence="2">
    <location>
        <begin position="184"/>
        <end position="204"/>
    </location>
</feature>
<feature type="topological domain" description="Cytoplasmic" evidence="2">
    <location>
        <begin position="205"/>
        <end position="232"/>
    </location>
</feature>
<feature type="transmembrane region" description="Helical" evidence="2">
    <location>
        <begin position="233"/>
        <end position="253"/>
    </location>
</feature>
<feature type="topological domain" description="Extracellular" evidence="2">
    <location>
        <begin position="254"/>
        <end position="265"/>
    </location>
</feature>
<feature type="transmembrane region" description="Helical" evidence="2">
    <location>
        <begin position="266"/>
        <end position="286"/>
    </location>
</feature>
<feature type="topological domain" description="Cytoplasmic" evidence="2">
    <location>
        <begin position="287"/>
        <end position="303"/>
    </location>
</feature>
<feature type="sequence conflict" description="In Ref. 5; AAM61605." evidence="4" ref="5">
    <original>G</original>
    <variation>R</variation>
    <location>
        <position position="207"/>
    </location>
</feature>
<evidence type="ECO:0000250" key="1"/>
<evidence type="ECO:0000255" key="2"/>
<evidence type="ECO:0000269" key="3">
    <source>
    </source>
</evidence>
<evidence type="ECO:0000305" key="4"/>
<protein>
    <recommendedName>
        <fullName>Tobamovirus multiplication protein 3</fullName>
        <shortName>AtTOM3</shortName>
    </recommendedName>
</protein>